<accession>Q1QNT2</accession>
<sequence length="714" mass="78181">MAAKPKTPPPVDSLTRAQAKIEHKRLALEIETHNERYYQKDAPTVSDAAYDALRQRLEAIEARFPDLITANSPTQTVGAAPARGFAKVQHAVPMLSLGNAFSDEEVAEFVERIQRFLKLGPDDIPAIVAEPKIDGLSLSLRYENGELVRAATRGDGFTGEDVTANVRTIKDVPHNLRGRNIPTACELRGEVYMLKTDFLALNKKQEDAGDTVFANPRNSAAGSLRQKDVAITASRPLKFFAYAWGEMTDRPADTQHDMLEWLKDVGFKVNPLIELCNSVEKVLKFYRKIGEQRASLGYDIDGVVYKVDRLDWQERLGFVSRSPRWAIAHKFAAEQATTILKGIDIQVGRTGAMTPVARLEPVTIGGVVVQNATLHNEDYIKGIGNDGQPIRDGVDLRVGDTVVVQRAGDVIPQVVSVVIDKRPNSAQPYAFPHTCPICGSHAVREEGEAVRRCTGALICPAQAVERLKHFVSRLAFDIDGLGEKQIQEFHERGWIKEPADIFTLRERNPKIKLEELEGFGEVSVRNLFAAIDARRTIELNRLIFALGIRHVGEGNAKLLARHYGGIDAFRAAMSEAAAAQTDDGNASEAYADLNNISGIGDIVADAVVEFFAETRNVKALNDLLEEIEVLPVAQARNDSAVAGKTVVFTGSLEKFTRDEAKASAERMGAKVSGSVSKKTDLVVAGPGAGSKLKDAEKHGVQVISEDEWLKLIEG</sequence>
<comment type="function">
    <text evidence="1">DNA ligase that catalyzes the formation of phosphodiester linkages between 5'-phosphoryl and 3'-hydroxyl groups in double-stranded DNA using NAD as a coenzyme and as the energy source for the reaction. It is essential for DNA replication and repair of damaged DNA.</text>
</comment>
<comment type="catalytic activity">
    <reaction evidence="1">
        <text>NAD(+) + (deoxyribonucleotide)n-3'-hydroxyl + 5'-phospho-(deoxyribonucleotide)m = (deoxyribonucleotide)n+m + AMP + beta-nicotinamide D-nucleotide.</text>
        <dbReference type="EC" id="6.5.1.2"/>
    </reaction>
</comment>
<comment type="cofactor">
    <cofactor evidence="1">
        <name>Mg(2+)</name>
        <dbReference type="ChEBI" id="CHEBI:18420"/>
    </cofactor>
    <cofactor evidence="1">
        <name>Mn(2+)</name>
        <dbReference type="ChEBI" id="CHEBI:29035"/>
    </cofactor>
</comment>
<comment type="similarity">
    <text evidence="1">Belongs to the NAD-dependent DNA ligase family. LigA subfamily.</text>
</comment>
<dbReference type="EC" id="6.5.1.2" evidence="1"/>
<dbReference type="EMBL" id="CP000319">
    <property type="protein sequence ID" value="ABE62115.1"/>
    <property type="molecule type" value="Genomic_DNA"/>
</dbReference>
<dbReference type="RefSeq" id="WP_011509807.1">
    <property type="nucleotide sequence ID" value="NC_007964.1"/>
</dbReference>
<dbReference type="SMR" id="Q1QNT2"/>
<dbReference type="STRING" id="323097.Nham_1290"/>
<dbReference type="KEGG" id="nha:Nham_1290"/>
<dbReference type="eggNOG" id="COG0272">
    <property type="taxonomic scope" value="Bacteria"/>
</dbReference>
<dbReference type="HOGENOM" id="CLU_007764_2_0_5"/>
<dbReference type="OrthoDB" id="9759736at2"/>
<dbReference type="Proteomes" id="UP000001953">
    <property type="component" value="Chromosome"/>
</dbReference>
<dbReference type="GO" id="GO:0005829">
    <property type="term" value="C:cytosol"/>
    <property type="evidence" value="ECO:0007669"/>
    <property type="project" value="TreeGrafter"/>
</dbReference>
<dbReference type="GO" id="GO:0003677">
    <property type="term" value="F:DNA binding"/>
    <property type="evidence" value="ECO:0007669"/>
    <property type="project" value="InterPro"/>
</dbReference>
<dbReference type="GO" id="GO:0003911">
    <property type="term" value="F:DNA ligase (NAD+) activity"/>
    <property type="evidence" value="ECO:0007669"/>
    <property type="project" value="UniProtKB-UniRule"/>
</dbReference>
<dbReference type="GO" id="GO:0046872">
    <property type="term" value="F:metal ion binding"/>
    <property type="evidence" value="ECO:0007669"/>
    <property type="project" value="UniProtKB-KW"/>
</dbReference>
<dbReference type="GO" id="GO:0006281">
    <property type="term" value="P:DNA repair"/>
    <property type="evidence" value="ECO:0007669"/>
    <property type="project" value="UniProtKB-KW"/>
</dbReference>
<dbReference type="GO" id="GO:0006260">
    <property type="term" value="P:DNA replication"/>
    <property type="evidence" value="ECO:0007669"/>
    <property type="project" value="UniProtKB-KW"/>
</dbReference>
<dbReference type="CDD" id="cd17748">
    <property type="entry name" value="BRCT_DNA_ligase_like"/>
    <property type="match status" value="1"/>
</dbReference>
<dbReference type="CDD" id="cd00114">
    <property type="entry name" value="LIGANc"/>
    <property type="match status" value="1"/>
</dbReference>
<dbReference type="FunFam" id="1.10.150.20:FF:000007">
    <property type="entry name" value="DNA ligase"/>
    <property type="match status" value="1"/>
</dbReference>
<dbReference type="FunFam" id="3.30.470.30:FF:000001">
    <property type="entry name" value="DNA ligase"/>
    <property type="match status" value="1"/>
</dbReference>
<dbReference type="Gene3D" id="6.20.10.30">
    <property type="match status" value="1"/>
</dbReference>
<dbReference type="Gene3D" id="1.10.150.20">
    <property type="entry name" value="5' to 3' exonuclease, C-terminal subdomain"/>
    <property type="match status" value="2"/>
</dbReference>
<dbReference type="Gene3D" id="3.40.50.10190">
    <property type="entry name" value="BRCT domain"/>
    <property type="match status" value="1"/>
</dbReference>
<dbReference type="Gene3D" id="3.30.470.30">
    <property type="entry name" value="DNA ligase/mRNA capping enzyme"/>
    <property type="match status" value="1"/>
</dbReference>
<dbReference type="Gene3D" id="1.10.287.610">
    <property type="entry name" value="Helix hairpin bin"/>
    <property type="match status" value="1"/>
</dbReference>
<dbReference type="Gene3D" id="2.40.50.140">
    <property type="entry name" value="Nucleic acid-binding proteins"/>
    <property type="match status" value="1"/>
</dbReference>
<dbReference type="HAMAP" id="MF_01588">
    <property type="entry name" value="DNA_ligase_A"/>
    <property type="match status" value="1"/>
</dbReference>
<dbReference type="InterPro" id="IPR001357">
    <property type="entry name" value="BRCT_dom"/>
</dbReference>
<dbReference type="InterPro" id="IPR036420">
    <property type="entry name" value="BRCT_dom_sf"/>
</dbReference>
<dbReference type="InterPro" id="IPR041663">
    <property type="entry name" value="DisA/LigA_HHH"/>
</dbReference>
<dbReference type="InterPro" id="IPR001679">
    <property type="entry name" value="DNA_ligase"/>
</dbReference>
<dbReference type="InterPro" id="IPR018239">
    <property type="entry name" value="DNA_ligase_AS"/>
</dbReference>
<dbReference type="InterPro" id="IPR033136">
    <property type="entry name" value="DNA_ligase_CS"/>
</dbReference>
<dbReference type="InterPro" id="IPR013839">
    <property type="entry name" value="DNAligase_adenylation"/>
</dbReference>
<dbReference type="InterPro" id="IPR013840">
    <property type="entry name" value="DNAligase_N"/>
</dbReference>
<dbReference type="InterPro" id="IPR003583">
    <property type="entry name" value="Hlx-hairpin-Hlx_DNA-bd_motif"/>
</dbReference>
<dbReference type="InterPro" id="IPR012340">
    <property type="entry name" value="NA-bd_OB-fold"/>
</dbReference>
<dbReference type="InterPro" id="IPR004150">
    <property type="entry name" value="NAD_DNA_ligase_OB"/>
</dbReference>
<dbReference type="InterPro" id="IPR010994">
    <property type="entry name" value="RuvA_2-like"/>
</dbReference>
<dbReference type="InterPro" id="IPR004149">
    <property type="entry name" value="Znf_DNAligase_C4"/>
</dbReference>
<dbReference type="NCBIfam" id="TIGR00575">
    <property type="entry name" value="dnlj"/>
    <property type="match status" value="1"/>
</dbReference>
<dbReference type="NCBIfam" id="NF005932">
    <property type="entry name" value="PRK07956.1"/>
    <property type="match status" value="1"/>
</dbReference>
<dbReference type="PANTHER" id="PTHR23389">
    <property type="entry name" value="CHROMOSOME TRANSMISSION FIDELITY FACTOR 18"/>
    <property type="match status" value="1"/>
</dbReference>
<dbReference type="PANTHER" id="PTHR23389:SF9">
    <property type="entry name" value="DNA LIGASE"/>
    <property type="match status" value="1"/>
</dbReference>
<dbReference type="Pfam" id="PF00533">
    <property type="entry name" value="BRCT"/>
    <property type="match status" value="1"/>
</dbReference>
<dbReference type="Pfam" id="PF01653">
    <property type="entry name" value="DNA_ligase_aden"/>
    <property type="match status" value="1"/>
</dbReference>
<dbReference type="Pfam" id="PF03120">
    <property type="entry name" value="DNA_ligase_OB"/>
    <property type="match status" value="1"/>
</dbReference>
<dbReference type="Pfam" id="PF03119">
    <property type="entry name" value="DNA_ligase_ZBD"/>
    <property type="match status" value="1"/>
</dbReference>
<dbReference type="Pfam" id="PF12826">
    <property type="entry name" value="HHH_2"/>
    <property type="match status" value="1"/>
</dbReference>
<dbReference type="PIRSF" id="PIRSF001604">
    <property type="entry name" value="LigA"/>
    <property type="match status" value="1"/>
</dbReference>
<dbReference type="SMART" id="SM00292">
    <property type="entry name" value="BRCT"/>
    <property type="match status" value="1"/>
</dbReference>
<dbReference type="SMART" id="SM00278">
    <property type="entry name" value="HhH1"/>
    <property type="match status" value="3"/>
</dbReference>
<dbReference type="SMART" id="SM00532">
    <property type="entry name" value="LIGANc"/>
    <property type="match status" value="1"/>
</dbReference>
<dbReference type="SUPFAM" id="SSF52113">
    <property type="entry name" value="BRCT domain"/>
    <property type="match status" value="1"/>
</dbReference>
<dbReference type="SUPFAM" id="SSF56091">
    <property type="entry name" value="DNA ligase/mRNA capping enzyme, catalytic domain"/>
    <property type="match status" value="1"/>
</dbReference>
<dbReference type="SUPFAM" id="SSF50249">
    <property type="entry name" value="Nucleic acid-binding proteins"/>
    <property type="match status" value="1"/>
</dbReference>
<dbReference type="SUPFAM" id="SSF47781">
    <property type="entry name" value="RuvA domain 2-like"/>
    <property type="match status" value="1"/>
</dbReference>
<dbReference type="PROSITE" id="PS50172">
    <property type="entry name" value="BRCT"/>
    <property type="match status" value="1"/>
</dbReference>
<dbReference type="PROSITE" id="PS01055">
    <property type="entry name" value="DNA_LIGASE_N1"/>
    <property type="match status" value="1"/>
</dbReference>
<dbReference type="PROSITE" id="PS01056">
    <property type="entry name" value="DNA_LIGASE_N2"/>
    <property type="match status" value="1"/>
</dbReference>
<protein>
    <recommendedName>
        <fullName evidence="1">DNA ligase</fullName>
        <ecNumber evidence="1">6.5.1.2</ecNumber>
    </recommendedName>
    <alternativeName>
        <fullName evidence="1">Polydeoxyribonucleotide synthase [NAD(+)]</fullName>
    </alternativeName>
</protein>
<gene>
    <name evidence="1" type="primary">ligA</name>
    <name type="ordered locus">Nham_1290</name>
</gene>
<proteinExistence type="inferred from homology"/>
<name>DNLJ_NITHX</name>
<evidence type="ECO:0000255" key="1">
    <source>
        <dbReference type="HAMAP-Rule" id="MF_01588"/>
    </source>
</evidence>
<organism>
    <name type="scientific">Nitrobacter hamburgensis (strain DSM 10229 / NCIMB 13809 / X14)</name>
    <dbReference type="NCBI Taxonomy" id="323097"/>
    <lineage>
        <taxon>Bacteria</taxon>
        <taxon>Pseudomonadati</taxon>
        <taxon>Pseudomonadota</taxon>
        <taxon>Alphaproteobacteria</taxon>
        <taxon>Hyphomicrobiales</taxon>
        <taxon>Nitrobacteraceae</taxon>
        <taxon>Nitrobacter</taxon>
    </lineage>
</organism>
<keyword id="KW-0227">DNA damage</keyword>
<keyword id="KW-0234">DNA repair</keyword>
<keyword id="KW-0235">DNA replication</keyword>
<keyword id="KW-0436">Ligase</keyword>
<keyword id="KW-0460">Magnesium</keyword>
<keyword id="KW-0464">Manganese</keyword>
<keyword id="KW-0479">Metal-binding</keyword>
<keyword id="KW-0520">NAD</keyword>
<keyword id="KW-1185">Reference proteome</keyword>
<keyword id="KW-0862">Zinc</keyword>
<feature type="chain" id="PRO_0000313336" description="DNA ligase">
    <location>
        <begin position="1"/>
        <end position="714"/>
    </location>
</feature>
<feature type="domain" description="BRCT" evidence="1">
    <location>
        <begin position="636"/>
        <end position="714"/>
    </location>
</feature>
<feature type="active site" description="N6-AMP-lysine intermediate" evidence="1">
    <location>
        <position position="132"/>
    </location>
</feature>
<feature type="binding site" evidence="1">
    <location>
        <begin position="47"/>
        <end position="51"/>
    </location>
    <ligand>
        <name>NAD(+)</name>
        <dbReference type="ChEBI" id="CHEBI:57540"/>
    </ligand>
</feature>
<feature type="binding site" evidence="1">
    <location>
        <begin position="96"/>
        <end position="97"/>
    </location>
    <ligand>
        <name>NAD(+)</name>
        <dbReference type="ChEBI" id="CHEBI:57540"/>
    </ligand>
</feature>
<feature type="binding site" evidence="1">
    <location>
        <position position="130"/>
    </location>
    <ligand>
        <name>NAD(+)</name>
        <dbReference type="ChEBI" id="CHEBI:57540"/>
    </ligand>
</feature>
<feature type="binding site" evidence="1">
    <location>
        <position position="153"/>
    </location>
    <ligand>
        <name>NAD(+)</name>
        <dbReference type="ChEBI" id="CHEBI:57540"/>
    </ligand>
</feature>
<feature type="binding site" evidence="1">
    <location>
        <position position="190"/>
    </location>
    <ligand>
        <name>NAD(+)</name>
        <dbReference type="ChEBI" id="CHEBI:57540"/>
    </ligand>
</feature>
<feature type="binding site" evidence="1">
    <location>
        <position position="306"/>
    </location>
    <ligand>
        <name>NAD(+)</name>
        <dbReference type="ChEBI" id="CHEBI:57540"/>
    </ligand>
</feature>
<feature type="binding site" evidence="1">
    <location>
        <position position="330"/>
    </location>
    <ligand>
        <name>NAD(+)</name>
        <dbReference type="ChEBI" id="CHEBI:57540"/>
    </ligand>
</feature>
<feature type="binding site" evidence="1">
    <location>
        <position position="435"/>
    </location>
    <ligand>
        <name>Zn(2+)</name>
        <dbReference type="ChEBI" id="CHEBI:29105"/>
    </ligand>
</feature>
<feature type="binding site" evidence="1">
    <location>
        <position position="438"/>
    </location>
    <ligand>
        <name>Zn(2+)</name>
        <dbReference type="ChEBI" id="CHEBI:29105"/>
    </ligand>
</feature>
<feature type="binding site" evidence="1">
    <location>
        <position position="453"/>
    </location>
    <ligand>
        <name>Zn(2+)</name>
        <dbReference type="ChEBI" id="CHEBI:29105"/>
    </ligand>
</feature>
<feature type="binding site" evidence="1">
    <location>
        <position position="459"/>
    </location>
    <ligand>
        <name>Zn(2+)</name>
        <dbReference type="ChEBI" id="CHEBI:29105"/>
    </ligand>
</feature>
<reference key="1">
    <citation type="submission" date="2006-03" db="EMBL/GenBank/DDBJ databases">
        <title>Complete sequence of chromosome of Nitrobacter hamburgensis X14.</title>
        <authorList>
            <consortium name="US DOE Joint Genome Institute"/>
            <person name="Copeland A."/>
            <person name="Lucas S."/>
            <person name="Lapidus A."/>
            <person name="Barry K."/>
            <person name="Detter J.C."/>
            <person name="Glavina del Rio T."/>
            <person name="Hammon N."/>
            <person name="Israni S."/>
            <person name="Dalin E."/>
            <person name="Tice H."/>
            <person name="Pitluck S."/>
            <person name="Chain P."/>
            <person name="Malfatti S."/>
            <person name="Shin M."/>
            <person name="Vergez L."/>
            <person name="Schmutz J."/>
            <person name="Larimer F."/>
            <person name="Land M."/>
            <person name="Hauser L."/>
            <person name="Kyrpides N."/>
            <person name="Ivanova N."/>
            <person name="Ward B."/>
            <person name="Arp D."/>
            <person name="Klotz M."/>
            <person name="Stein L."/>
            <person name="O'Mullan G."/>
            <person name="Starkenburg S."/>
            <person name="Sayavedra L."/>
            <person name="Poret-Peterson A.T."/>
            <person name="Gentry M.E."/>
            <person name="Bruce D."/>
            <person name="Richardson P."/>
        </authorList>
    </citation>
    <scope>NUCLEOTIDE SEQUENCE [LARGE SCALE GENOMIC DNA]</scope>
    <source>
        <strain>DSM 10229 / NCIMB 13809 / X14</strain>
    </source>
</reference>